<name>NU2M_NATST</name>
<evidence type="ECO:0000250" key="1">
    <source>
        <dbReference type="UniProtKB" id="P03891"/>
    </source>
</evidence>
<evidence type="ECO:0000250" key="2">
    <source>
        <dbReference type="UniProtKB" id="P03892"/>
    </source>
</evidence>
<evidence type="ECO:0000255" key="3"/>
<evidence type="ECO:0000305" key="4"/>
<keyword id="KW-0249">Electron transport</keyword>
<keyword id="KW-0472">Membrane</keyword>
<keyword id="KW-0496">Mitochondrion</keyword>
<keyword id="KW-0999">Mitochondrion inner membrane</keyword>
<keyword id="KW-0520">NAD</keyword>
<keyword id="KW-0679">Respiratory chain</keyword>
<keyword id="KW-1278">Translocase</keyword>
<keyword id="KW-0812">Transmembrane</keyword>
<keyword id="KW-1133">Transmembrane helix</keyword>
<keyword id="KW-0813">Transport</keyword>
<keyword id="KW-0830">Ubiquinone</keyword>
<reference key="1">
    <citation type="submission" date="2003-12" db="EMBL/GenBank/DDBJ databases">
        <title>Bats and birds: flying in the face of mtDNA evolutionary rates.</title>
        <authorList>
            <person name="Worthington Wilmer J.M."/>
            <person name="Schneider C.J."/>
            <person name="Sorenson M.D."/>
        </authorList>
    </citation>
    <scope>NUCLEOTIDE SEQUENCE [GENOMIC DNA]</scope>
    <source>
        <strain>Isolate 1</strain>
    </source>
</reference>
<dbReference type="EC" id="7.1.1.2" evidence="1"/>
<dbReference type="EMBL" id="AY504578">
    <property type="protein sequence ID" value="AAS91443.1"/>
    <property type="molecule type" value="Genomic_DNA"/>
</dbReference>
<dbReference type="SMR" id="Q330B4"/>
<dbReference type="GO" id="GO:0005743">
    <property type="term" value="C:mitochondrial inner membrane"/>
    <property type="evidence" value="ECO:0000250"/>
    <property type="project" value="UniProtKB"/>
</dbReference>
<dbReference type="GO" id="GO:0008137">
    <property type="term" value="F:NADH dehydrogenase (ubiquinone) activity"/>
    <property type="evidence" value="ECO:0000250"/>
    <property type="project" value="UniProtKB"/>
</dbReference>
<dbReference type="GO" id="GO:0006120">
    <property type="term" value="P:mitochondrial electron transport, NADH to ubiquinone"/>
    <property type="evidence" value="ECO:0000250"/>
    <property type="project" value="UniProtKB"/>
</dbReference>
<dbReference type="GO" id="GO:0032981">
    <property type="term" value="P:mitochondrial respiratory chain complex I assembly"/>
    <property type="evidence" value="ECO:0000250"/>
    <property type="project" value="UniProtKB"/>
</dbReference>
<dbReference type="InterPro" id="IPR050175">
    <property type="entry name" value="Complex_I_Subunit_2"/>
</dbReference>
<dbReference type="InterPro" id="IPR010933">
    <property type="entry name" value="NADH_DH_su2_C"/>
</dbReference>
<dbReference type="InterPro" id="IPR003917">
    <property type="entry name" value="NADH_UbQ_OxRdtase_chain2"/>
</dbReference>
<dbReference type="InterPro" id="IPR001750">
    <property type="entry name" value="ND/Mrp_TM"/>
</dbReference>
<dbReference type="PANTHER" id="PTHR46552">
    <property type="entry name" value="NADH-UBIQUINONE OXIDOREDUCTASE CHAIN 2"/>
    <property type="match status" value="1"/>
</dbReference>
<dbReference type="PANTHER" id="PTHR46552:SF1">
    <property type="entry name" value="NADH-UBIQUINONE OXIDOREDUCTASE CHAIN 2"/>
    <property type="match status" value="1"/>
</dbReference>
<dbReference type="Pfam" id="PF06444">
    <property type="entry name" value="NADH_dehy_S2_C"/>
    <property type="match status" value="1"/>
</dbReference>
<dbReference type="Pfam" id="PF00361">
    <property type="entry name" value="Proton_antipo_M"/>
    <property type="match status" value="1"/>
</dbReference>
<dbReference type="PRINTS" id="PR01436">
    <property type="entry name" value="NADHDHGNASE2"/>
</dbReference>
<organism>
    <name type="scientific">Natalus stramineus</name>
    <name type="common">Mexican funnel-eared bat</name>
    <dbReference type="NCBI Taxonomy" id="155040"/>
    <lineage>
        <taxon>Eukaryota</taxon>
        <taxon>Metazoa</taxon>
        <taxon>Chordata</taxon>
        <taxon>Craniata</taxon>
        <taxon>Vertebrata</taxon>
        <taxon>Euteleostomi</taxon>
        <taxon>Mammalia</taxon>
        <taxon>Eutheria</taxon>
        <taxon>Laurasiatheria</taxon>
        <taxon>Chiroptera</taxon>
        <taxon>Yangochiroptera</taxon>
        <taxon>Natalidae</taxon>
        <taxon>Natalus</taxon>
    </lineage>
</organism>
<protein>
    <recommendedName>
        <fullName evidence="1">NADH-ubiquinone oxidoreductase chain 2</fullName>
        <ecNumber evidence="1">7.1.1.2</ecNumber>
    </recommendedName>
    <alternativeName>
        <fullName>NADH dehydrogenase subunit 2</fullName>
    </alternativeName>
</protein>
<accession>Q330B4</accession>
<feature type="chain" id="PRO_0000226709" description="NADH-ubiquinone oxidoreductase chain 2">
    <location>
        <begin position="1"/>
        <end position="347"/>
    </location>
</feature>
<feature type="transmembrane region" description="Helical" evidence="3">
    <location>
        <begin position="1"/>
        <end position="21"/>
    </location>
</feature>
<feature type="transmembrane region" description="Helical" evidence="3">
    <location>
        <begin position="25"/>
        <end position="45"/>
    </location>
</feature>
<feature type="transmembrane region" description="Helical" evidence="3">
    <location>
        <begin position="59"/>
        <end position="79"/>
    </location>
</feature>
<feature type="transmembrane region" description="Helical" evidence="3">
    <location>
        <begin position="96"/>
        <end position="116"/>
    </location>
</feature>
<feature type="transmembrane region" description="Helical" evidence="3">
    <location>
        <begin position="127"/>
        <end position="147"/>
    </location>
</feature>
<feature type="transmembrane region" description="Helical" evidence="3">
    <location>
        <begin position="149"/>
        <end position="169"/>
    </location>
</feature>
<feature type="transmembrane region" description="Helical" evidence="3">
    <location>
        <begin position="178"/>
        <end position="198"/>
    </location>
</feature>
<feature type="transmembrane region" description="Helical" evidence="3">
    <location>
        <begin position="200"/>
        <end position="220"/>
    </location>
</feature>
<feature type="transmembrane region" description="Helical" evidence="3">
    <location>
        <begin position="247"/>
        <end position="267"/>
    </location>
</feature>
<feature type="transmembrane region" description="Helical" evidence="3">
    <location>
        <begin position="276"/>
        <end position="296"/>
    </location>
</feature>
<feature type="transmembrane region" description="Helical" evidence="3">
    <location>
        <begin position="325"/>
        <end position="345"/>
    </location>
</feature>
<sequence length="347" mass="38829">MNPLIFSTILATIIMGTAIVMTSSHWLTIWIGFEMNMLAIIPMLMKQHNPRSTEAATKYFLTQATASMLLMLAVIMNLTHTGQWTITKSFNPLASIIMTIALTMKLGLSPFHFWVPEVAQGIPLSSCLILLTWQKLAPLSILYMISPTINLNLLLSMSLISVAIGGWGGLNQTQLRKIMAYSSIAHMGWMTAILAYNPTMTMLNLLVYITMTTTMFMLLIKSASTTTLSLAIMWNKVPLVTTLTLTIMLSLGGLPPLTGFLPKWMIIQELTKNNNIIMPTLMAIMALLSLYFYMRLTYATTLTMFPTTNNMKMKWQFEPKKHMNLLSPLIVMSTLTLPLAPMMSLLD</sequence>
<gene>
    <name evidence="1" type="primary">MT-ND2</name>
    <name type="synonym">MTND2</name>
    <name type="synonym">NADH2</name>
    <name type="synonym">ND2</name>
</gene>
<geneLocation type="mitochondrion"/>
<comment type="function">
    <text evidence="1">Core subunit of the mitochondrial membrane respiratory chain NADH dehydrogenase (Complex I) which catalyzes electron transfer from NADH through the respiratory chain, using ubiquinone as an electron acceptor. Essential for the catalytic activity and assembly of complex I.</text>
</comment>
<comment type="catalytic activity">
    <reaction evidence="1">
        <text>a ubiquinone + NADH + 5 H(+)(in) = a ubiquinol + NAD(+) + 4 H(+)(out)</text>
        <dbReference type="Rhea" id="RHEA:29091"/>
        <dbReference type="Rhea" id="RHEA-COMP:9565"/>
        <dbReference type="Rhea" id="RHEA-COMP:9566"/>
        <dbReference type="ChEBI" id="CHEBI:15378"/>
        <dbReference type="ChEBI" id="CHEBI:16389"/>
        <dbReference type="ChEBI" id="CHEBI:17976"/>
        <dbReference type="ChEBI" id="CHEBI:57540"/>
        <dbReference type="ChEBI" id="CHEBI:57945"/>
        <dbReference type="EC" id="7.1.1.2"/>
    </reaction>
</comment>
<comment type="subunit">
    <text evidence="1 2">Core subunit of respiratory chain NADH dehydrogenase (Complex I) which is composed of 45 different subunits. Interacts with TMEM242 (By similarity).</text>
</comment>
<comment type="subcellular location">
    <subcellularLocation>
        <location evidence="2">Mitochondrion inner membrane</location>
        <topology evidence="3">Multi-pass membrane protein</topology>
    </subcellularLocation>
</comment>
<comment type="similarity">
    <text evidence="4">Belongs to the complex I subunit 2 family.</text>
</comment>
<proteinExistence type="inferred from homology"/>